<accession>B1LIM5</accession>
<comment type="function">
    <text evidence="1">Catalyzes the reaction of cyanate with bicarbonate to produce ammonia and carbon dioxide.</text>
</comment>
<comment type="catalytic activity">
    <reaction evidence="1">
        <text>cyanate + hydrogencarbonate + 3 H(+) = NH4(+) + 2 CO2</text>
        <dbReference type="Rhea" id="RHEA:11120"/>
        <dbReference type="ChEBI" id="CHEBI:15378"/>
        <dbReference type="ChEBI" id="CHEBI:16526"/>
        <dbReference type="ChEBI" id="CHEBI:17544"/>
        <dbReference type="ChEBI" id="CHEBI:28938"/>
        <dbReference type="ChEBI" id="CHEBI:29195"/>
        <dbReference type="EC" id="4.2.1.104"/>
    </reaction>
</comment>
<comment type="similarity">
    <text evidence="1">Belongs to the cyanase family.</text>
</comment>
<feature type="chain" id="PRO_1000128229" description="Cyanate hydratase">
    <location>
        <begin position="1"/>
        <end position="156"/>
    </location>
</feature>
<feature type="active site" evidence="1">
    <location>
        <position position="96"/>
    </location>
</feature>
<feature type="active site" evidence="1">
    <location>
        <position position="99"/>
    </location>
</feature>
<feature type="active site" evidence="1">
    <location>
        <position position="122"/>
    </location>
</feature>
<name>CYNS_ECOSM</name>
<proteinExistence type="inferred from homology"/>
<keyword id="KW-0456">Lyase</keyword>
<protein>
    <recommendedName>
        <fullName evidence="1">Cyanate hydratase</fullName>
        <shortName evidence="1">Cyanase</shortName>
        <ecNumber evidence="1">4.2.1.104</ecNumber>
    </recommendedName>
    <alternativeName>
        <fullName evidence="1">Cyanate hydrolase</fullName>
    </alternativeName>
    <alternativeName>
        <fullName evidence="1">Cyanate lyase</fullName>
    </alternativeName>
</protein>
<evidence type="ECO:0000255" key="1">
    <source>
        <dbReference type="HAMAP-Rule" id="MF_00535"/>
    </source>
</evidence>
<sequence>MIQSQINRNIRLDLADAILLSKAKKDLSFAEIADGTGLAEAFVTAALLGQQALPADAARLVGAKLDLDEDAILLLQMIPLRGCIDDRIPTDPTMYRFYEMLQVYGTTLKALVHEKFGDGIISAINFKLDVKKVADPEGGERAVITLDGKYLPTKPF</sequence>
<dbReference type="EC" id="4.2.1.104" evidence="1"/>
<dbReference type="EMBL" id="CP000970">
    <property type="protein sequence ID" value="ACB18920.1"/>
    <property type="molecule type" value="Genomic_DNA"/>
</dbReference>
<dbReference type="RefSeq" id="WP_000616241.1">
    <property type="nucleotide sequence ID" value="NC_010498.1"/>
</dbReference>
<dbReference type="SMR" id="B1LIM5"/>
<dbReference type="GeneID" id="75202503"/>
<dbReference type="KEGG" id="ecm:EcSMS35_0371"/>
<dbReference type="HOGENOM" id="CLU_103452_1_1_6"/>
<dbReference type="Proteomes" id="UP000007011">
    <property type="component" value="Chromosome"/>
</dbReference>
<dbReference type="GO" id="GO:0008824">
    <property type="term" value="F:cyanate hydratase activity"/>
    <property type="evidence" value="ECO:0007669"/>
    <property type="project" value="UniProtKB-UniRule"/>
</dbReference>
<dbReference type="GO" id="GO:0003677">
    <property type="term" value="F:DNA binding"/>
    <property type="evidence" value="ECO:0007669"/>
    <property type="project" value="InterPro"/>
</dbReference>
<dbReference type="GO" id="GO:0009439">
    <property type="term" value="P:cyanate metabolic process"/>
    <property type="evidence" value="ECO:0007669"/>
    <property type="project" value="UniProtKB-UniRule"/>
</dbReference>
<dbReference type="CDD" id="cd00559">
    <property type="entry name" value="Cyanase_C"/>
    <property type="match status" value="1"/>
</dbReference>
<dbReference type="FunFam" id="3.30.1160.10:FF:000001">
    <property type="entry name" value="Cyanate hydratase"/>
    <property type="match status" value="1"/>
</dbReference>
<dbReference type="Gene3D" id="3.30.1160.10">
    <property type="entry name" value="Cyanate lyase, C-terminal domain"/>
    <property type="match status" value="1"/>
</dbReference>
<dbReference type="Gene3D" id="1.10.260.40">
    <property type="entry name" value="lambda repressor-like DNA-binding domains"/>
    <property type="match status" value="1"/>
</dbReference>
<dbReference type="HAMAP" id="MF_00535">
    <property type="entry name" value="Cyanate_hydrat"/>
    <property type="match status" value="1"/>
</dbReference>
<dbReference type="InterPro" id="IPR008076">
    <property type="entry name" value="Cyanase"/>
</dbReference>
<dbReference type="InterPro" id="IPR003712">
    <property type="entry name" value="Cyanate_lyase_C"/>
</dbReference>
<dbReference type="InterPro" id="IPR036581">
    <property type="entry name" value="Cyanate_lyase_C_sf"/>
</dbReference>
<dbReference type="InterPro" id="IPR048564">
    <property type="entry name" value="CYNS_N"/>
</dbReference>
<dbReference type="InterPro" id="IPR010982">
    <property type="entry name" value="Lambda_DNA-bd_dom_sf"/>
</dbReference>
<dbReference type="NCBIfam" id="TIGR00673">
    <property type="entry name" value="cynS"/>
    <property type="match status" value="1"/>
</dbReference>
<dbReference type="NCBIfam" id="NF002773">
    <property type="entry name" value="PRK02866.1"/>
    <property type="match status" value="1"/>
</dbReference>
<dbReference type="PANTHER" id="PTHR34186">
    <property type="entry name" value="CYANATE HYDRATASE"/>
    <property type="match status" value="1"/>
</dbReference>
<dbReference type="PANTHER" id="PTHR34186:SF2">
    <property type="entry name" value="CYANATE HYDRATASE"/>
    <property type="match status" value="1"/>
</dbReference>
<dbReference type="Pfam" id="PF02560">
    <property type="entry name" value="Cyanate_lyase"/>
    <property type="match status" value="1"/>
</dbReference>
<dbReference type="Pfam" id="PF21291">
    <property type="entry name" value="CYNS_N"/>
    <property type="match status" value="1"/>
</dbReference>
<dbReference type="PIRSF" id="PIRSF001263">
    <property type="entry name" value="Cyanate_hydratas"/>
    <property type="match status" value="1"/>
</dbReference>
<dbReference type="PRINTS" id="PR01693">
    <property type="entry name" value="CYANASE"/>
</dbReference>
<dbReference type="SMART" id="SM01116">
    <property type="entry name" value="Cyanate_lyase"/>
    <property type="match status" value="1"/>
</dbReference>
<dbReference type="SUPFAM" id="SSF55234">
    <property type="entry name" value="Cyanase C-terminal domain"/>
    <property type="match status" value="1"/>
</dbReference>
<dbReference type="SUPFAM" id="SSF47413">
    <property type="entry name" value="lambda repressor-like DNA-binding domains"/>
    <property type="match status" value="1"/>
</dbReference>
<organism>
    <name type="scientific">Escherichia coli (strain SMS-3-5 / SECEC)</name>
    <dbReference type="NCBI Taxonomy" id="439855"/>
    <lineage>
        <taxon>Bacteria</taxon>
        <taxon>Pseudomonadati</taxon>
        <taxon>Pseudomonadota</taxon>
        <taxon>Gammaproteobacteria</taxon>
        <taxon>Enterobacterales</taxon>
        <taxon>Enterobacteriaceae</taxon>
        <taxon>Escherichia</taxon>
    </lineage>
</organism>
<reference key="1">
    <citation type="journal article" date="2008" name="J. Bacteriol.">
        <title>Insights into the environmental resistance gene pool from the genome sequence of the multidrug-resistant environmental isolate Escherichia coli SMS-3-5.</title>
        <authorList>
            <person name="Fricke W.F."/>
            <person name="Wright M.S."/>
            <person name="Lindell A.H."/>
            <person name="Harkins D.M."/>
            <person name="Baker-Austin C."/>
            <person name="Ravel J."/>
            <person name="Stepanauskas R."/>
        </authorList>
    </citation>
    <scope>NUCLEOTIDE SEQUENCE [LARGE SCALE GENOMIC DNA]</scope>
    <source>
        <strain>SMS-3-5 / SECEC</strain>
    </source>
</reference>
<gene>
    <name evidence="1" type="primary">cynS</name>
    <name type="ordered locus">EcSMS35_0371</name>
</gene>